<geneLocation type="chloroplast"/>
<evidence type="ECO:0000255" key="1">
    <source>
        <dbReference type="HAMAP-Rule" id="MF_01456"/>
    </source>
</evidence>
<gene>
    <name evidence="1" type="primary">ndhE</name>
</gene>
<feature type="chain" id="PRO_0000360344" description="NAD(P)H-quinone oxidoreductase subunit 4L, chloroplastic">
    <location>
        <begin position="1"/>
        <end position="101"/>
    </location>
</feature>
<feature type="transmembrane region" description="Helical" evidence="1">
    <location>
        <begin position="2"/>
        <end position="22"/>
    </location>
</feature>
<feature type="transmembrane region" description="Helical" evidence="1">
    <location>
        <begin position="32"/>
        <end position="52"/>
    </location>
</feature>
<feature type="transmembrane region" description="Helical" evidence="1">
    <location>
        <begin position="61"/>
        <end position="81"/>
    </location>
</feature>
<protein>
    <recommendedName>
        <fullName evidence="1">NAD(P)H-quinone oxidoreductase subunit 4L, chloroplastic</fullName>
        <ecNumber evidence="1">7.1.1.-</ecNumber>
    </recommendedName>
    <alternativeName>
        <fullName evidence="1">NAD(P)H dehydrogenase subunit 4L</fullName>
    </alternativeName>
    <alternativeName>
        <fullName evidence="1">NADH-plastoquinone oxidoreductase subunit 4L</fullName>
    </alternativeName>
</protein>
<comment type="function">
    <text evidence="1">NDH shuttles electrons from NAD(P)H:plastoquinone, via FMN and iron-sulfur (Fe-S) centers, to quinones in the photosynthetic chain and possibly in a chloroplast respiratory chain. The immediate electron acceptor for the enzyme in this species is believed to be plastoquinone. Couples the redox reaction to proton translocation, and thus conserves the redox energy in a proton gradient.</text>
</comment>
<comment type="catalytic activity">
    <reaction evidence="1">
        <text>a plastoquinone + NADH + (n+1) H(+)(in) = a plastoquinol + NAD(+) + n H(+)(out)</text>
        <dbReference type="Rhea" id="RHEA:42608"/>
        <dbReference type="Rhea" id="RHEA-COMP:9561"/>
        <dbReference type="Rhea" id="RHEA-COMP:9562"/>
        <dbReference type="ChEBI" id="CHEBI:15378"/>
        <dbReference type="ChEBI" id="CHEBI:17757"/>
        <dbReference type="ChEBI" id="CHEBI:57540"/>
        <dbReference type="ChEBI" id="CHEBI:57945"/>
        <dbReference type="ChEBI" id="CHEBI:62192"/>
    </reaction>
</comment>
<comment type="catalytic activity">
    <reaction evidence="1">
        <text>a plastoquinone + NADPH + (n+1) H(+)(in) = a plastoquinol + NADP(+) + n H(+)(out)</text>
        <dbReference type="Rhea" id="RHEA:42612"/>
        <dbReference type="Rhea" id="RHEA-COMP:9561"/>
        <dbReference type="Rhea" id="RHEA-COMP:9562"/>
        <dbReference type="ChEBI" id="CHEBI:15378"/>
        <dbReference type="ChEBI" id="CHEBI:17757"/>
        <dbReference type="ChEBI" id="CHEBI:57783"/>
        <dbReference type="ChEBI" id="CHEBI:58349"/>
        <dbReference type="ChEBI" id="CHEBI:62192"/>
    </reaction>
</comment>
<comment type="subunit">
    <text evidence="1">NDH is composed of at least 16 different subunits, 5 of which are encoded in the nucleus.</text>
</comment>
<comment type="subcellular location">
    <subcellularLocation>
        <location evidence="1">Plastid</location>
        <location evidence="1">Chloroplast thylakoid membrane</location>
        <topology evidence="1">Multi-pass membrane protein</topology>
    </subcellularLocation>
</comment>
<comment type="similarity">
    <text evidence="1">Belongs to the complex I subunit 4L family.</text>
</comment>
<dbReference type="EC" id="7.1.1.-" evidence="1"/>
<dbReference type="EMBL" id="EU117376">
    <property type="protein sequence ID" value="ABV66205.1"/>
    <property type="molecule type" value="Genomic_DNA"/>
</dbReference>
<dbReference type="RefSeq" id="YP_001718488.1">
    <property type="nucleotide sequence ID" value="NC_010433.1"/>
</dbReference>
<dbReference type="SMR" id="B1NWK1"/>
<dbReference type="GeneID" id="6000075"/>
<dbReference type="KEGG" id="mesc:6000075"/>
<dbReference type="OrthoDB" id="1925110at2759"/>
<dbReference type="GO" id="GO:0009535">
    <property type="term" value="C:chloroplast thylakoid membrane"/>
    <property type="evidence" value="ECO:0007669"/>
    <property type="project" value="UniProtKB-SubCell"/>
</dbReference>
<dbReference type="GO" id="GO:0016655">
    <property type="term" value="F:oxidoreductase activity, acting on NAD(P)H, quinone or similar compound as acceptor"/>
    <property type="evidence" value="ECO:0007669"/>
    <property type="project" value="UniProtKB-UniRule"/>
</dbReference>
<dbReference type="GO" id="GO:0048038">
    <property type="term" value="F:quinone binding"/>
    <property type="evidence" value="ECO:0007669"/>
    <property type="project" value="UniProtKB-KW"/>
</dbReference>
<dbReference type="GO" id="GO:0042773">
    <property type="term" value="P:ATP synthesis coupled electron transport"/>
    <property type="evidence" value="ECO:0007669"/>
    <property type="project" value="InterPro"/>
</dbReference>
<dbReference type="GO" id="GO:0019684">
    <property type="term" value="P:photosynthesis, light reaction"/>
    <property type="evidence" value="ECO:0007669"/>
    <property type="project" value="UniProtKB-UniRule"/>
</dbReference>
<dbReference type="FunFam" id="1.10.287.3510:FF:000001">
    <property type="entry name" value="NADH-quinone oxidoreductase subunit K"/>
    <property type="match status" value="1"/>
</dbReference>
<dbReference type="Gene3D" id="1.10.287.3510">
    <property type="match status" value="1"/>
</dbReference>
<dbReference type="HAMAP" id="MF_01456">
    <property type="entry name" value="NDH1_NuoK"/>
    <property type="match status" value="1"/>
</dbReference>
<dbReference type="InterPro" id="IPR001133">
    <property type="entry name" value="NADH_UbQ_OxRdtase_chain4L/K"/>
</dbReference>
<dbReference type="InterPro" id="IPR039428">
    <property type="entry name" value="NUOK/Mnh_C1-like"/>
</dbReference>
<dbReference type="NCBIfam" id="NF004320">
    <property type="entry name" value="PRK05715.1-2"/>
    <property type="match status" value="1"/>
</dbReference>
<dbReference type="NCBIfam" id="NF004322">
    <property type="entry name" value="PRK05715.1-4"/>
    <property type="match status" value="1"/>
</dbReference>
<dbReference type="NCBIfam" id="NF004323">
    <property type="entry name" value="PRK05715.1-5"/>
    <property type="match status" value="1"/>
</dbReference>
<dbReference type="PANTHER" id="PTHR11434:SF16">
    <property type="entry name" value="NADH-UBIQUINONE OXIDOREDUCTASE CHAIN 4L"/>
    <property type="match status" value="1"/>
</dbReference>
<dbReference type="PANTHER" id="PTHR11434">
    <property type="entry name" value="NADH-UBIQUINONE OXIDOREDUCTASE SUBUNIT ND4L"/>
    <property type="match status" value="1"/>
</dbReference>
<dbReference type="Pfam" id="PF00420">
    <property type="entry name" value="Oxidored_q2"/>
    <property type="match status" value="1"/>
</dbReference>
<organism>
    <name type="scientific">Manihot esculenta</name>
    <name type="common">Cassava</name>
    <name type="synonym">Jatropha manihot</name>
    <dbReference type="NCBI Taxonomy" id="3983"/>
    <lineage>
        <taxon>Eukaryota</taxon>
        <taxon>Viridiplantae</taxon>
        <taxon>Streptophyta</taxon>
        <taxon>Embryophyta</taxon>
        <taxon>Tracheophyta</taxon>
        <taxon>Spermatophyta</taxon>
        <taxon>Magnoliopsida</taxon>
        <taxon>eudicotyledons</taxon>
        <taxon>Gunneridae</taxon>
        <taxon>Pentapetalae</taxon>
        <taxon>rosids</taxon>
        <taxon>fabids</taxon>
        <taxon>Malpighiales</taxon>
        <taxon>Euphorbiaceae</taxon>
        <taxon>Crotonoideae</taxon>
        <taxon>Manihoteae</taxon>
        <taxon>Manihot</taxon>
    </lineage>
</organism>
<keyword id="KW-0150">Chloroplast</keyword>
<keyword id="KW-0472">Membrane</keyword>
<keyword id="KW-0520">NAD</keyword>
<keyword id="KW-0521">NADP</keyword>
<keyword id="KW-0934">Plastid</keyword>
<keyword id="KW-0618">Plastoquinone</keyword>
<keyword id="KW-0874">Quinone</keyword>
<keyword id="KW-0793">Thylakoid</keyword>
<keyword id="KW-1278">Translocase</keyword>
<keyword id="KW-0812">Transmembrane</keyword>
<keyword id="KW-1133">Transmembrane helix</keyword>
<keyword id="KW-0813">Transport</keyword>
<name>NU4LC_MANES</name>
<accession>B1NWK1</accession>
<reference key="1">
    <citation type="journal article" date="2008" name="Theor. Appl. Genet.">
        <title>The complete nucleotide sequence of the cassava (Manihot esculenta) chloroplast genome and the evolution of atpF in Malpighiales: RNA editing and multiple losses of a group II intron.</title>
        <authorList>
            <person name="Daniell H."/>
            <person name="Wurdack K.J."/>
            <person name="Kanagaraj A."/>
            <person name="Lee S.-B."/>
            <person name="Saski C."/>
            <person name="Jansen R.K."/>
        </authorList>
    </citation>
    <scope>NUCLEOTIDE SEQUENCE [LARGE SCALE GENOMIC DNA]</scope>
    <source>
        <strain>cv. TME3</strain>
    </source>
</reference>
<proteinExistence type="inferred from homology"/>
<sequence length="101" mass="11235">MMLEHVLVLSAYLFSIGIYGLITSRNMVRALMCLELILNAVNLNFVTFSDFFDSRQLKGNIFSIFVIAIAAAEAAIGPAIVSAIYRNRKSIHINQSNLLNK</sequence>